<proteinExistence type="evidence at transcript level"/>
<keyword id="KW-0106">Calcium</keyword>
<keyword id="KW-0479">Metal-binding</keyword>
<keyword id="KW-1185">Reference proteome</keyword>
<evidence type="ECO:0000255" key="1">
    <source>
        <dbReference type="PROSITE-ProRule" id="PRU00448"/>
    </source>
</evidence>
<evidence type="ECO:0000303" key="2">
    <source>
    </source>
</evidence>
<evidence type="ECO:0000303" key="3">
    <source>
    </source>
</evidence>
<accession>P32070</accession>
<accession>G4VA24</accession>
<organism>
    <name type="scientific">Schistosoma mansoni</name>
    <name type="common">Blood fluke</name>
    <dbReference type="NCBI Taxonomy" id="6183"/>
    <lineage>
        <taxon>Eukaryota</taxon>
        <taxon>Metazoa</taxon>
        <taxon>Spiralia</taxon>
        <taxon>Lophotrochozoa</taxon>
        <taxon>Platyhelminthes</taxon>
        <taxon>Trematoda</taxon>
        <taxon>Digenea</taxon>
        <taxon>Strigeidida</taxon>
        <taxon>Schistosomatoidea</taxon>
        <taxon>Schistosomatidae</taxon>
        <taxon>Schistosoma</taxon>
    </lineage>
</organism>
<dbReference type="EMBL" id="M67506">
    <property type="protein sequence ID" value="AAA29923.1"/>
    <property type="molecule type" value="mRNA"/>
</dbReference>
<dbReference type="EMBL" id="U30663">
    <property type="protein sequence ID" value="AAA74050.1"/>
    <property type="molecule type" value="mRNA"/>
</dbReference>
<dbReference type="EMBL" id="HE601624">
    <property type="protein sequence ID" value="CCD76401.1"/>
    <property type="molecule type" value="Genomic_DNA"/>
</dbReference>
<dbReference type="PIR" id="A45630">
    <property type="entry name" value="A45630"/>
</dbReference>
<dbReference type="RefSeq" id="XP_018649273.1">
    <property type="nucleotide sequence ID" value="XM_018794907.1"/>
</dbReference>
<dbReference type="SMR" id="P32070"/>
<dbReference type="STRING" id="6183.P32070"/>
<dbReference type="EnsemblMetazoa" id="Smp_086480.1">
    <property type="protein sequence ID" value="Smp_086480.1"/>
    <property type="gene ID" value="Smp_086480"/>
</dbReference>
<dbReference type="GeneID" id="8347700"/>
<dbReference type="KEGG" id="smm:Smp_086480"/>
<dbReference type="WBParaSite" id="Smp_086480.1">
    <property type="protein sequence ID" value="Smp_086480.1"/>
    <property type="gene ID" value="Smp_086480"/>
</dbReference>
<dbReference type="CTD" id="8347700"/>
<dbReference type="HOGENOM" id="CLU_1557207_0_0_1"/>
<dbReference type="InParanoid" id="P32070"/>
<dbReference type="OrthoDB" id="26525at2759"/>
<dbReference type="PhylomeDB" id="P32070"/>
<dbReference type="Proteomes" id="UP000008854">
    <property type="component" value="Unassembled WGS sequence"/>
</dbReference>
<dbReference type="GO" id="GO:0030286">
    <property type="term" value="C:dynein complex"/>
    <property type="evidence" value="ECO:0007669"/>
    <property type="project" value="InterPro"/>
</dbReference>
<dbReference type="GO" id="GO:0005509">
    <property type="term" value="F:calcium ion binding"/>
    <property type="evidence" value="ECO:0007669"/>
    <property type="project" value="InterPro"/>
</dbReference>
<dbReference type="GO" id="GO:0007017">
    <property type="term" value="P:microtubule-based process"/>
    <property type="evidence" value="ECO:0007669"/>
    <property type="project" value="InterPro"/>
</dbReference>
<dbReference type="CDD" id="cd21454">
    <property type="entry name" value="DLC-like_TAL"/>
    <property type="match status" value="1"/>
</dbReference>
<dbReference type="Gene3D" id="1.10.238.10">
    <property type="entry name" value="EF-hand"/>
    <property type="match status" value="1"/>
</dbReference>
<dbReference type="Gene3D" id="3.30.740.10">
    <property type="entry name" value="Protein Inhibitor Of Neuronal Nitric Oxide Synthase"/>
    <property type="match status" value="1"/>
</dbReference>
<dbReference type="InterPro" id="IPR037177">
    <property type="entry name" value="DLC_sf"/>
</dbReference>
<dbReference type="InterPro" id="IPR001372">
    <property type="entry name" value="Dynein_light_chain_typ-1/2"/>
</dbReference>
<dbReference type="InterPro" id="IPR011992">
    <property type="entry name" value="EF-hand-dom_pair"/>
</dbReference>
<dbReference type="InterPro" id="IPR018247">
    <property type="entry name" value="EF_Hand_1_Ca_BS"/>
</dbReference>
<dbReference type="InterPro" id="IPR002048">
    <property type="entry name" value="EF_hand_dom"/>
</dbReference>
<dbReference type="Pfam" id="PF01221">
    <property type="entry name" value="Dynein_light"/>
    <property type="match status" value="1"/>
</dbReference>
<dbReference type="Pfam" id="PF13499">
    <property type="entry name" value="EF-hand_7"/>
    <property type="match status" value="1"/>
</dbReference>
<dbReference type="SMART" id="SM01375">
    <property type="entry name" value="Dynein_light"/>
    <property type="match status" value="1"/>
</dbReference>
<dbReference type="SMART" id="SM00054">
    <property type="entry name" value="EFh"/>
    <property type="match status" value="1"/>
</dbReference>
<dbReference type="SUPFAM" id="SSF54648">
    <property type="entry name" value="DLC"/>
    <property type="match status" value="1"/>
</dbReference>
<dbReference type="SUPFAM" id="SSF47473">
    <property type="entry name" value="EF-hand"/>
    <property type="match status" value="1"/>
</dbReference>
<dbReference type="PROSITE" id="PS00018">
    <property type="entry name" value="EF_HAND_1"/>
    <property type="match status" value="1"/>
</dbReference>
<dbReference type="PROSITE" id="PS50222">
    <property type="entry name" value="EF_HAND_2"/>
    <property type="match status" value="1"/>
</dbReference>
<gene>
    <name type="primary">SM21.7</name>
    <name type="synonym">SM24</name>
    <name evidence="2" type="ORF">Smp_086480</name>
</gene>
<comment type="developmental stage">
    <text>Occurs in similar relative abundances in infected hepatopancreas, schistosomula and adults.</text>
</comment>
<protein>
    <recommendedName>
        <fullName>Antigen Sm21.7</fullName>
    </recommendedName>
    <alternativeName>
        <fullName evidence="3">Tegumental-allergen-like protein-2</fullName>
        <shortName evidence="3">SmTAL1</shortName>
        <shortName evidence="3">TAL1</shortName>
    </alternativeName>
</protein>
<reference key="1">
    <citation type="journal article" date="1992" name="Mol. Biochem. Parasitol.">
        <title>Cloning of a 21.7-kDa vaccine-dominant antigen gene of Schistosoma mansoni reveals an EF hand-like motif.</title>
        <authorList>
            <person name="Francis P."/>
            <person name="Bickle Q.D."/>
        </authorList>
    </citation>
    <scope>NUCLEOTIDE SEQUENCE [MRNA]</scope>
    <source>
        <strain>Puerto Rican</strain>
    </source>
</reference>
<reference key="2">
    <citation type="thesis" date="1995" institute="Theodor Bilharz Research Institute / Cairo" country="Egypt">
        <authorList>
            <person name="Saber M.A."/>
        </authorList>
    </citation>
    <scope>NUCLEOTIDE SEQUENCE [MRNA]</scope>
    <source>
        <strain>Egyptian</strain>
    </source>
</reference>
<reference key="3">
    <citation type="journal article" date="2012" name="PLoS Negl. Trop. Dis.">
        <title>A systematically improved high quality genome and transcriptome of the human blood fluke Schistosoma mansoni.</title>
        <authorList>
            <person name="Protasio A.V."/>
            <person name="Tsai I.J."/>
            <person name="Babbage A."/>
            <person name="Nichol S."/>
            <person name="Hunt M."/>
            <person name="Aslett M.A."/>
            <person name="De Silva N."/>
            <person name="Velarde G.S."/>
            <person name="Anderson T.J."/>
            <person name="Clark R.C."/>
            <person name="Davidson C."/>
            <person name="Dillon G.P."/>
            <person name="Holroyd N.E."/>
            <person name="LoVerde P.T."/>
            <person name="Lloyd C."/>
            <person name="McQuillan J."/>
            <person name="Oliveira G."/>
            <person name="Otto T.D."/>
            <person name="Parker-Manuel S.J."/>
            <person name="Quail M.A."/>
            <person name="Wilson R.A."/>
            <person name="Zerlotini A."/>
            <person name="Dunne D.W."/>
            <person name="Berriman M."/>
        </authorList>
    </citation>
    <scope>NUCLEOTIDE SEQUENCE [LARGE SCALE GENOMIC DNA]</scope>
    <source>
        <strain>Puerto Rican</strain>
    </source>
</reference>
<reference key="4">
    <citation type="journal article" date="2012" name="PLoS Negl. Trop. Dis.">
        <title>The Schistosoma mansoni tegumental-allergen-like (TAL) protein family: influence of developmental expression on human IgE responses.</title>
        <authorList>
            <person name="Fitzsimmons C.M."/>
            <person name="Jones F.M."/>
            <person name="Stearn A."/>
            <person name="Chalmers I.W."/>
            <person name="Hoffmann K.F."/>
            <person name="Wawrzyniak J."/>
            <person name="Wilson S."/>
            <person name="Kabatereine N.B."/>
            <person name="Dunne D.W."/>
        </authorList>
    </citation>
    <scope>NOMENCLATURE</scope>
</reference>
<feature type="chain" id="PRO_0000073857" description="Antigen Sm21.7">
    <location>
        <begin position="1"/>
        <end position="184"/>
    </location>
</feature>
<feature type="domain" description="EF-hand" evidence="1">
    <location>
        <begin position="37"/>
        <end position="72"/>
    </location>
</feature>
<feature type="binding site" evidence="1">
    <location>
        <position position="50"/>
    </location>
    <ligand>
        <name>Ca(2+)</name>
        <dbReference type="ChEBI" id="CHEBI:29108"/>
    </ligand>
</feature>
<feature type="binding site" evidence="1">
    <location>
        <position position="52"/>
    </location>
    <ligand>
        <name>Ca(2+)</name>
        <dbReference type="ChEBI" id="CHEBI:29108"/>
    </ligand>
</feature>
<feature type="binding site" evidence="1">
    <location>
        <position position="54"/>
    </location>
    <ligand>
        <name>Ca(2+)</name>
        <dbReference type="ChEBI" id="CHEBI:29108"/>
    </ligand>
</feature>
<feature type="binding site" evidence="1">
    <location>
        <position position="56"/>
    </location>
    <ligand>
        <name>Ca(2+)</name>
        <dbReference type="ChEBI" id="CHEBI:29108"/>
    </ligand>
</feature>
<feature type="binding site" evidence="1">
    <location>
        <position position="61"/>
    </location>
    <ligand>
        <name>Ca(2+)</name>
        <dbReference type="ChEBI" id="CHEBI:29108"/>
    </ligand>
</feature>
<name>SM21_SCHMA</name>
<sequence>MDSPMEKFIQTYLTLLRDGDETVETSKLSESCRKEKLDMKQVNEWIALFDVDKDQKITFEEFCRGLGLKQNEMRIERNHIKTVQSGREQSLPEGVSIIASTMPKPKQVEVTQLFKDIYNEVKKDPDMNKVVKTFKSELERRYGRVWQVNAVTHSYWASFSHEPFQSIQFQYDNKIILAWRTPSN</sequence>